<organism>
    <name type="scientific">Rattus norvegicus</name>
    <name type="common">Rat</name>
    <dbReference type="NCBI Taxonomy" id="10116"/>
    <lineage>
        <taxon>Eukaryota</taxon>
        <taxon>Metazoa</taxon>
        <taxon>Chordata</taxon>
        <taxon>Craniata</taxon>
        <taxon>Vertebrata</taxon>
        <taxon>Euteleostomi</taxon>
        <taxon>Mammalia</taxon>
        <taxon>Eutheria</taxon>
        <taxon>Euarchontoglires</taxon>
        <taxon>Glires</taxon>
        <taxon>Rodentia</taxon>
        <taxon>Myomorpha</taxon>
        <taxon>Muroidea</taxon>
        <taxon>Muridae</taxon>
        <taxon>Murinae</taxon>
        <taxon>Rattus</taxon>
    </lineage>
</organism>
<keyword id="KW-0007">Acetylation</keyword>
<keyword id="KW-0164">Citrullination</keyword>
<keyword id="KW-0963">Cytoplasm</keyword>
<keyword id="KW-0903">Direct protein sequencing</keyword>
<keyword id="KW-0597">Phosphoprotein</keyword>
<keyword id="KW-1185">Reference proteome</keyword>
<keyword id="KW-0687">Ribonucleoprotein</keyword>
<keyword id="KW-0689">Ribosomal protein</keyword>
<keyword id="KW-0810">Translation regulation</keyword>
<feature type="initiator methionine" description="Removed" evidence="2 3">
    <location>
        <position position="1"/>
    </location>
</feature>
<feature type="chain" id="PRO_0000133773" description="Large ribosomal subunit protein uL13">
    <location>
        <begin position="2"/>
        <end position="203"/>
    </location>
</feature>
<feature type="modified residue" description="N-acetylalanine" evidence="2">
    <location>
        <position position="2"/>
    </location>
</feature>
<feature type="modified residue" description="Citrulline" evidence="1">
    <location>
        <position position="59"/>
    </location>
</feature>
<feature type="modified residue" description="Phosphoserine" evidence="2">
    <location>
        <position position="77"/>
    </location>
</feature>
<feature type="modified residue" description="Citrulline" evidence="1">
    <location>
        <position position="140"/>
    </location>
</feature>
<feature type="modified residue" description="N6-acetyllysine" evidence="2">
    <location>
        <position position="191"/>
    </location>
</feature>
<protein>
    <recommendedName>
        <fullName evidence="4">Large ribosomal subunit protein uL13</fullName>
    </recommendedName>
    <alternativeName>
        <fullName>60S ribosomal protein L13a</fullName>
    </alternativeName>
</protein>
<name>RL13A_RAT</name>
<comment type="function">
    <text evidence="2">Associated with ribosomes but is not required for canonical ribosome function and has extra-ribosomal functions. Component of the GAIT (gamma interferon-activated inhibitor of translation) complex which mediates interferon-gamma-induced transcript-selective translation inhibition in inflammation processes. Upon interferon-gamma activation and subsequent phosphorylation dissociates from the ribosome and assembles into the GAIT complex which binds to stem loop-containing GAIT elements in the 3'-UTR of diverse inflammatory mRNAs (such as ceruplasmin) and suppresses their translation. In the GAIT complex interacts with m7G cap-bound eIF4G at or near the eIF3-binding site and blocks the recruitment of the 43S ribosomal complex. Involved in methylation of rRNA.</text>
</comment>
<comment type="subunit">
    <text evidence="2">Component of the 60S ribosome. Component of the GAIT complex. Interacts with EIF4G1.</text>
</comment>
<comment type="subcellular location">
    <subcellularLocation>
        <location evidence="2">Cytoplasm</location>
    </subcellularLocation>
</comment>
<comment type="PTM">
    <text evidence="1">Phosphorylation at Ser-77 upon interferon-gamma treatment in macrophages involves a DAPK1-DAPK3 kinase cascade and is causing release from the ribosome, association with the GAIT complex and subsequent involvement in transcript-selective translation inhibition.</text>
</comment>
<comment type="PTM">
    <text evidence="1">Citrullinated by PADI4.</text>
</comment>
<comment type="similarity">
    <text evidence="4">Belongs to the universal ribosomal protein uL13 family.</text>
</comment>
<sequence>MAEGQVLVLDGRSHLLGRLAAIVAKQVLLGRKVVVVRCEGINISGNFYRNKLKYLAFLRKRMNTNPSRGPYHFRAPSRIFWRTVRGMLPHKTKRGQAALERLKVLDGIPPPYDKKKRMVVPAALKVVRLKPTRKFAYLGRLAHEVGWKYQAVTATLEEKRKEKAKIHYRKKKQLLRLRKQAEKNVEKKICKFTEVLKTNGLLV</sequence>
<evidence type="ECO:0000250" key="1">
    <source>
        <dbReference type="UniProtKB" id="P19253"/>
    </source>
</evidence>
<evidence type="ECO:0000250" key="2">
    <source>
        <dbReference type="UniProtKB" id="P40429"/>
    </source>
</evidence>
<evidence type="ECO:0000269" key="3">
    <source>
    </source>
</evidence>
<evidence type="ECO:0000305" key="4"/>
<gene>
    <name type="primary">Rpl13a</name>
</gene>
<accession>P35427</accession>
<proteinExistence type="evidence at protein level"/>
<reference key="1">
    <citation type="journal article" date="1994" name="J. Biol. Chem.">
        <title>A leucine zipper-like motif and a basic region-leucine zipper-like element in rat ribosomal protein L13a. Identification of the tum-transplantation antigen P198.</title>
        <authorList>
            <person name="Chan Y.-L."/>
            <person name="Olvera J."/>
            <person name="Glueck A."/>
            <person name="Wool I.G."/>
        </authorList>
    </citation>
    <scope>NUCLEOTIDE SEQUENCE [MRNA]</scope>
    <scope>PROTEIN SEQUENCE OF 2-12</scope>
    <source>
        <strain>Sprague-Dawley</strain>
        <tissue>Liver</tissue>
    </source>
</reference>
<dbReference type="EMBL" id="X68282">
    <property type="protein sequence ID" value="CAA48343.1"/>
    <property type="molecule type" value="mRNA"/>
</dbReference>
<dbReference type="PIR" id="A53204">
    <property type="entry name" value="A53204"/>
</dbReference>
<dbReference type="SMR" id="P35427"/>
<dbReference type="FunCoup" id="P35427">
    <property type="interactions" value="2239"/>
</dbReference>
<dbReference type="IntAct" id="P35427">
    <property type="interactions" value="5"/>
</dbReference>
<dbReference type="STRING" id="10116.ENSRNOP00000027976"/>
<dbReference type="GlyGen" id="P35427">
    <property type="glycosylation" value="1 site"/>
</dbReference>
<dbReference type="iPTMnet" id="P35427"/>
<dbReference type="PhosphoSitePlus" id="P35427"/>
<dbReference type="jPOST" id="P35427"/>
<dbReference type="PaxDb" id="10116-ENSRNOP00000027976"/>
<dbReference type="UCSC" id="RGD:628697">
    <property type="organism name" value="rat"/>
</dbReference>
<dbReference type="AGR" id="RGD:628697"/>
<dbReference type="RGD" id="628697">
    <property type="gene designation" value="Rpl13a"/>
</dbReference>
<dbReference type="eggNOG" id="KOG3204">
    <property type="taxonomic scope" value="Eukaryota"/>
</dbReference>
<dbReference type="InParanoid" id="P35427"/>
<dbReference type="PhylomeDB" id="P35427"/>
<dbReference type="Reactome" id="R-RNO-156827">
    <property type="pathway name" value="L13a-mediated translational silencing of Ceruloplasmin expression"/>
</dbReference>
<dbReference type="Reactome" id="R-RNO-1799339">
    <property type="pathway name" value="SRP-dependent cotranslational protein targeting to membrane"/>
</dbReference>
<dbReference type="Reactome" id="R-RNO-6791226">
    <property type="pathway name" value="Major pathway of rRNA processing in the nucleolus and cytosol"/>
</dbReference>
<dbReference type="Reactome" id="R-RNO-72689">
    <property type="pathway name" value="Formation of a pool of free 40S subunits"/>
</dbReference>
<dbReference type="Reactome" id="R-RNO-72706">
    <property type="pathway name" value="GTP hydrolysis and joining of the 60S ribosomal subunit"/>
</dbReference>
<dbReference type="Reactome" id="R-RNO-975956">
    <property type="pathway name" value="Nonsense Mediated Decay (NMD) independent of the Exon Junction Complex (EJC)"/>
</dbReference>
<dbReference type="Reactome" id="R-RNO-975957">
    <property type="pathway name" value="Nonsense Mediated Decay (NMD) enhanced by the Exon Junction Complex (EJC)"/>
</dbReference>
<dbReference type="PRO" id="PR:P35427"/>
<dbReference type="Proteomes" id="UP000002494">
    <property type="component" value="Unplaced"/>
</dbReference>
<dbReference type="GO" id="GO:0005737">
    <property type="term" value="C:cytoplasm"/>
    <property type="evidence" value="ECO:0000266"/>
    <property type="project" value="RGD"/>
</dbReference>
<dbReference type="GO" id="GO:0022625">
    <property type="term" value="C:cytosolic large ribosomal subunit"/>
    <property type="evidence" value="ECO:0000314"/>
    <property type="project" value="RGD"/>
</dbReference>
<dbReference type="GO" id="GO:0022626">
    <property type="term" value="C:cytosolic ribosome"/>
    <property type="evidence" value="ECO:0000266"/>
    <property type="project" value="RGD"/>
</dbReference>
<dbReference type="GO" id="GO:0097452">
    <property type="term" value="C:GAIT complex"/>
    <property type="evidence" value="ECO:0000250"/>
    <property type="project" value="UniProtKB"/>
</dbReference>
<dbReference type="GO" id="GO:1990904">
    <property type="term" value="C:ribonucleoprotein complex"/>
    <property type="evidence" value="ECO:0000266"/>
    <property type="project" value="RGD"/>
</dbReference>
<dbReference type="GO" id="GO:0005840">
    <property type="term" value="C:ribosome"/>
    <property type="evidence" value="ECO:0000314"/>
    <property type="project" value="RGD"/>
</dbReference>
<dbReference type="GO" id="GO:0045202">
    <property type="term" value="C:synapse"/>
    <property type="evidence" value="ECO:0000266"/>
    <property type="project" value="RGD"/>
</dbReference>
<dbReference type="GO" id="GO:0003729">
    <property type="term" value="F:mRNA binding"/>
    <property type="evidence" value="ECO:0000266"/>
    <property type="project" value="RGD"/>
</dbReference>
<dbReference type="GO" id="GO:0003735">
    <property type="term" value="F:structural constituent of ribosome"/>
    <property type="evidence" value="ECO:0000266"/>
    <property type="project" value="RGD"/>
</dbReference>
<dbReference type="GO" id="GO:0071320">
    <property type="term" value="P:cellular response to cAMP"/>
    <property type="evidence" value="ECO:0000270"/>
    <property type="project" value="RGD"/>
</dbReference>
<dbReference type="GO" id="GO:0071480">
    <property type="term" value="P:cellular response to gamma radiation"/>
    <property type="evidence" value="ECO:0000270"/>
    <property type="project" value="RGD"/>
</dbReference>
<dbReference type="GO" id="GO:0071346">
    <property type="term" value="P:cellular response to type II interferon"/>
    <property type="evidence" value="ECO:0000266"/>
    <property type="project" value="RGD"/>
</dbReference>
<dbReference type="GO" id="GO:0071493">
    <property type="term" value="P:cellular response to UV-B"/>
    <property type="evidence" value="ECO:0000270"/>
    <property type="project" value="RGD"/>
</dbReference>
<dbReference type="GO" id="GO:0042592">
    <property type="term" value="P:homeostatic process"/>
    <property type="evidence" value="ECO:0000266"/>
    <property type="project" value="RGD"/>
</dbReference>
<dbReference type="GO" id="GO:0060425">
    <property type="term" value="P:lung morphogenesis"/>
    <property type="evidence" value="ECO:0000266"/>
    <property type="project" value="RGD"/>
</dbReference>
<dbReference type="GO" id="GO:0048246">
    <property type="term" value="P:macrophage chemotaxis"/>
    <property type="evidence" value="ECO:0000266"/>
    <property type="project" value="RGD"/>
</dbReference>
<dbReference type="GO" id="GO:1901194">
    <property type="term" value="P:negative regulation of formation of translation preinitiation complex"/>
    <property type="evidence" value="ECO:0000250"/>
    <property type="project" value="UniProtKB"/>
</dbReference>
<dbReference type="GO" id="GO:0017148">
    <property type="term" value="P:negative regulation of translation"/>
    <property type="evidence" value="ECO:0000250"/>
    <property type="project" value="UniProtKB"/>
</dbReference>
<dbReference type="GO" id="GO:0032496">
    <property type="term" value="P:response to lipopolysaccharide"/>
    <property type="evidence" value="ECO:0000266"/>
    <property type="project" value="RGD"/>
</dbReference>
<dbReference type="GO" id="GO:0006412">
    <property type="term" value="P:translation"/>
    <property type="evidence" value="ECO:0007669"/>
    <property type="project" value="InterPro"/>
</dbReference>
<dbReference type="CDD" id="cd00392">
    <property type="entry name" value="Ribosomal_L13"/>
    <property type="match status" value="1"/>
</dbReference>
<dbReference type="FunFam" id="6.10.250.3250:FF:000001">
    <property type="entry name" value="60S ribosomal protein L13a"/>
    <property type="match status" value="1"/>
</dbReference>
<dbReference type="FunFam" id="3.90.1180.10:FF:000002">
    <property type="entry name" value="60S ribosomal protein L16"/>
    <property type="match status" value="1"/>
</dbReference>
<dbReference type="Gene3D" id="6.10.250.3250">
    <property type="match status" value="1"/>
</dbReference>
<dbReference type="Gene3D" id="3.90.1180.10">
    <property type="entry name" value="Ribosomal protein L13"/>
    <property type="match status" value="1"/>
</dbReference>
<dbReference type="HAMAP" id="MF_01366">
    <property type="entry name" value="Ribosomal_uL13"/>
    <property type="match status" value="1"/>
</dbReference>
<dbReference type="InterPro" id="IPR005822">
    <property type="entry name" value="Ribosomal_uL13"/>
</dbReference>
<dbReference type="InterPro" id="IPR023563">
    <property type="entry name" value="Ribosomal_uL13_CS"/>
</dbReference>
<dbReference type="InterPro" id="IPR005755">
    <property type="entry name" value="Ribosomal_uL13_euk/arc"/>
</dbReference>
<dbReference type="InterPro" id="IPR036899">
    <property type="entry name" value="Ribosomal_uL13_sf"/>
</dbReference>
<dbReference type="NCBIfam" id="TIGR01077">
    <property type="entry name" value="L13_A_E"/>
    <property type="match status" value="1"/>
</dbReference>
<dbReference type="PANTHER" id="PTHR11545:SF3">
    <property type="entry name" value="LARGE RIBOSOMAL SUBUNIT PROTEIN UL13"/>
    <property type="match status" value="1"/>
</dbReference>
<dbReference type="PANTHER" id="PTHR11545">
    <property type="entry name" value="RIBOSOMAL PROTEIN L13"/>
    <property type="match status" value="1"/>
</dbReference>
<dbReference type="Pfam" id="PF00572">
    <property type="entry name" value="Ribosomal_L13"/>
    <property type="match status" value="1"/>
</dbReference>
<dbReference type="SUPFAM" id="SSF52161">
    <property type="entry name" value="Ribosomal protein L13"/>
    <property type="match status" value="1"/>
</dbReference>
<dbReference type="PROSITE" id="PS00783">
    <property type="entry name" value="RIBOSOMAL_L13"/>
    <property type="match status" value="1"/>
</dbReference>